<keyword id="KW-1003">Cell membrane</keyword>
<keyword id="KW-0255">Endonuclease</keyword>
<keyword id="KW-0378">Hydrolase</keyword>
<keyword id="KW-0472">Membrane</keyword>
<keyword id="KW-0540">Nuclease</keyword>
<keyword id="KW-1185">Reference proteome</keyword>
<keyword id="KW-0694">RNA-binding</keyword>
<keyword id="KW-0812">Transmembrane</keyword>
<keyword id="KW-1133">Transmembrane helix</keyword>
<evidence type="ECO:0000255" key="1">
    <source>
        <dbReference type="HAMAP-Rule" id="MF_00335"/>
    </source>
</evidence>
<evidence type="ECO:0000255" key="2">
    <source>
        <dbReference type="PROSITE-ProRule" id="PRU01175"/>
    </source>
</evidence>
<sequence>MKIDMMTMILAVIAAAIGFLIGNLLRKKSSDAIVASAEELAAKMVEESKRQAETITKEASLQAKDVVYQAKADFERETKDKRRDLQALEKRLQQKEENLDKKMNLFDQRDAEFLKREQGLAAKEQVLGQKDEKLNQLISEERTRLENISGMTAAEAKKILMETMENEAKLDAAKRIKAIEEEARETADKKSKEIMALAIQRYAGEYVAERTVSVVALPSDEMKGRIIGREGRNIRALEAATGIDLIIDDTPEAVILSGFNPVRREVAKLSLEKLIADGRIHPGRIEEVVAKAEEEVELAMKEAGEQAAFDLGVHGIHPEILKLIGRLKYRTSYSQNVYQHSLEVAFLCGIMAAELGINVKQAKRAGLLHDLGKAVDHEVEGSHAVIGAELAKKYGESPKIVHAIMAHHEDEKPATVLAILVQAADALSGARPGARREMMETYVKRLDDLERIACSFSGVTNSFAIQAGREIRVMVSSEEISDERTLILAKDIAKKIETEMTYPGQIKINVIRETRATEYAR</sequence>
<dbReference type="EC" id="3.1.-.-" evidence="1"/>
<dbReference type="EMBL" id="CP000698">
    <property type="protein sequence ID" value="ABQ25306.1"/>
    <property type="molecule type" value="Genomic_DNA"/>
</dbReference>
<dbReference type="RefSeq" id="WP_011938028.1">
    <property type="nucleotide sequence ID" value="NC_009483.1"/>
</dbReference>
<dbReference type="SMR" id="A5GAT3"/>
<dbReference type="STRING" id="351605.Gura_1100"/>
<dbReference type="KEGG" id="gur:Gura_1100"/>
<dbReference type="HOGENOM" id="CLU_028328_1_0_7"/>
<dbReference type="OrthoDB" id="9803205at2"/>
<dbReference type="Proteomes" id="UP000006695">
    <property type="component" value="Chromosome"/>
</dbReference>
<dbReference type="GO" id="GO:0005886">
    <property type="term" value="C:plasma membrane"/>
    <property type="evidence" value="ECO:0007669"/>
    <property type="project" value="UniProtKB-SubCell"/>
</dbReference>
<dbReference type="GO" id="GO:0003723">
    <property type="term" value="F:RNA binding"/>
    <property type="evidence" value="ECO:0007669"/>
    <property type="project" value="UniProtKB-UniRule"/>
</dbReference>
<dbReference type="GO" id="GO:0004521">
    <property type="term" value="F:RNA endonuclease activity"/>
    <property type="evidence" value="ECO:0007669"/>
    <property type="project" value="UniProtKB-UniRule"/>
</dbReference>
<dbReference type="GO" id="GO:0006402">
    <property type="term" value="P:mRNA catabolic process"/>
    <property type="evidence" value="ECO:0007669"/>
    <property type="project" value="UniProtKB-UniRule"/>
</dbReference>
<dbReference type="CDD" id="cd00077">
    <property type="entry name" value="HDc"/>
    <property type="match status" value="1"/>
</dbReference>
<dbReference type="CDD" id="cd22431">
    <property type="entry name" value="KH-I_RNaseY"/>
    <property type="match status" value="1"/>
</dbReference>
<dbReference type="FunFam" id="1.10.3210.10:FF:000022">
    <property type="entry name" value="Ribonuclease Y"/>
    <property type="match status" value="1"/>
</dbReference>
<dbReference type="Gene3D" id="1.10.3210.10">
    <property type="entry name" value="Hypothetical protein af1432"/>
    <property type="match status" value="1"/>
</dbReference>
<dbReference type="HAMAP" id="MF_00335">
    <property type="entry name" value="RNase_Y"/>
    <property type="match status" value="1"/>
</dbReference>
<dbReference type="InterPro" id="IPR003607">
    <property type="entry name" value="HD/PDEase_dom"/>
</dbReference>
<dbReference type="InterPro" id="IPR006674">
    <property type="entry name" value="HD_domain"/>
</dbReference>
<dbReference type="InterPro" id="IPR006675">
    <property type="entry name" value="HDIG_dom"/>
</dbReference>
<dbReference type="InterPro" id="IPR004087">
    <property type="entry name" value="KH_dom"/>
</dbReference>
<dbReference type="InterPro" id="IPR004088">
    <property type="entry name" value="KH_dom_type_1"/>
</dbReference>
<dbReference type="InterPro" id="IPR036612">
    <property type="entry name" value="KH_dom_type_1_sf"/>
</dbReference>
<dbReference type="InterPro" id="IPR017705">
    <property type="entry name" value="Ribonuclease_Y"/>
</dbReference>
<dbReference type="InterPro" id="IPR022711">
    <property type="entry name" value="RNase_Y_N"/>
</dbReference>
<dbReference type="NCBIfam" id="TIGR00277">
    <property type="entry name" value="HDIG"/>
    <property type="match status" value="1"/>
</dbReference>
<dbReference type="NCBIfam" id="TIGR03319">
    <property type="entry name" value="RNase_Y"/>
    <property type="match status" value="1"/>
</dbReference>
<dbReference type="PANTHER" id="PTHR12826">
    <property type="entry name" value="RIBONUCLEASE Y"/>
    <property type="match status" value="1"/>
</dbReference>
<dbReference type="PANTHER" id="PTHR12826:SF15">
    <property type="entry name" value="RIBONUCLEASE Y"/>
    <property type="match status" value="1"/>
</dbReference>
<dbReference type="Pfam" id="PF01966">
    <property type="entry name" value="HD"/>
    <property type="match status" value="1"/>
</dbReference>
<dbReference type="Pfam" id="PF00013">
    <property type="entry name" value="KH_1"/>
    <property type="match status" value="1"/>
</dbReference>
<dbReference type="Pfam" id="PF12072">
    <property type="entry name" value="RNase_Y_N"/>
    <property type="match status" value="1"/>
</dbReference>
<dbReference type="SMART" id="SM00471">
    <property type="entry name" value="HDc"/>
    <property type="match status" value="1"/>
</dbReference>
<dbReference type="SMART" id="SM00322">
    <property type="entry name" value="KH"/>
    <property type="match status" value="1"/>
</dbReference>
<dbReference type="SUPFAM" id="SSF54791">
    <property type="entry name" value="Eukaryotic type KH-domain (KH-domain type I)"/>
    <property type="match status" value="1"/>
</dbReference>
<dbReference type="SUPFAM" id="SSF109604">
    <property type="entry name" value="HD-domain/PDEase-like"/>
    <property type="match status" value="1"/>
</dbReference>
<dbReference type="PROSITE" id="PS51831">
    <property type="entry name" value="HD"/>
    <property type="match status" value="1"/>
</dbReference>
<dbReference type="PROSITE" id="PS50084">
    <property type="entry name" value="KH_TYPE_1"/>
    <property type="match status" value="1"/>
</dbReference>
<name>RNY_GEOUR</name>
<organism>
    <name type="scientific">Geotalea uraniireducens (strain Rf4)</name>
    <name type="common">Geobacter uraniireducens</name>
    <dbReference type="NCBI Taxonomy" id="351605"/>
    <lineage>
        <taxon>Bacteria</taxon>
        <taxon>Pseudomonadati</taxon>
        <taxon>Thermodesulfobacteriota</taxon>
        <taxon>Desulfuromonadia</taxon>
        <taxon>Geobacterales</taxon>
        <taxon>Geobacteraceae</taxon>
        <taxon>Geotalea</taxon>
    </lineage>
</organism>
<accession>A5GAT3</accession>
<proteinExistence type="inferred from homology"/>
<feature type="chain" id="PRO_1000079267" description="Ribonuclease Y">
    <location>
        <begin position="1"/>
        <end position="521"/>
    </location>
</feature>
<feature type="transmembrane region" description="Helical" evidence="1">
    <location>
        <begin position="5"/>
        <end position="25"/>
    </location>
</feature>
<feature type="domain" description="KH" evidence="1">
    <location>
        <begin position="211"/>
        <end position="271"/>
    </location>
</feature>
<feature type="domain" description="HD" evidence="2">
    <location>
        <begin position="337"/>
        <end position="430"/>
    </location>
</feature>
<protein>
    <recommendedName>
        <fullName evidence="1">Ribonuclease Y</fullName>
        <shortName evidence="1">RNase Y</shortName>
        <ecNumber evidence="1">3.1.-.-</ecNumber>
    </recommendedName>
</protein>
<reference key="1">
    <citation type="submission" date="2007-05" db="EMBL/GenBank/DDBJ databases">
        <title>Complete sequence of Geobacter uraniireducens Rf4.</title>
        <authorList>
            <consortium name="US DOE Joint Genome Institute"/>
            <person name="Copeland A."/>
            <person name="Lucas S."/>
            <person name="Lapidus A."/>
            <person name="Barry K."/>
            <person name="Detter J.C."/>
            <person name="Glavina del Rio T."/>
            <person name="Hammon N."/>
            <person name="Israni S."/>
            <person name="Dalin E."/>
            <person name="Tice H."/>
            <person name="Pitluck S."/>
            <person name="Chertkov O."/>
            <person name="Brettin T."/>
            <person name="Bruce D."/>
            <person name="Han C."/>
            <person name="Schmutz J."/>
            <person name="Larimer F."/>
            <person name="Land M."/>
            <person name="Hauser L."/>
            <person name="Kyrpides N."/>
            <person name="Mikhailova N."/>
            <person name="Shelobolina E."/>
            <person name="Aklujkar M."/>
            <person name="Lovley D."/>
            <person name="Richardson P."/>
        </authorList>
    </citation>
    <scope>NUCLEOTIDE SEQUENCE [LARGE SCALE GENOMIC DNA]</scope>
    <source>
        <strain>ATCC BAA-1134 / JCM 13001 / Rf4</strain>
    </source>
</reference>
<gene>
    <name evidence="1" type="primary">rny</name>
    <name type="ordered locus">Gura_1100</name>
</gene>
<comment type="function">
    <text evidence="1">Endoribonuclease that initiates mRNA decay.</text>
</comment>
<comment type="subcellular location">
    <subcellularLocation>
        <location evidence="1">Cell membrane</location>
        <topology evidence="1">Single-pass membrane protein</topology>
    </subcellularLocation>
</comment>
<comment type="similarity">
    <text evidence="1">Belongs to the RNase Y family.</text>
</comment>